<proteinExistence type="inferred from homology"/>
<organism>
    <name type="scientific">Francisella tularensis subsp. tularensis (strain FSC 198)</name>
    <dbReference type="NCBI Taxonomy" id="393115"/>
    <lineage>
        <taxon>Bacteria</taxon>
        <taxon>Pseudomonadati</taxon>
        <taxon>Pseudomonadota</taxon>
        <taxon>Gammaproteobacteria</taxon>
        <taxon>Thiotrichales</taxon>
        <taxon>Francisellaceae</taxon>
        <taxon>Francisella</taxon>
    </lineage>
</organism>
<comment type="function">
    <text evidence="1">Catalyzes the pyruvoyl-dependent decarboxylation of aspartate to produce beta-alanine.</text>
</comment>
<comment type="catalytic activity">
    <reaction evidence="1">
        <text>L-aspartate + H(+) = beta-alanine + CO2</text>
        <dbReference type="Rhea" id="RHEA:19497"/>
        <dbReference type="ChEBI" id="CHEBI:15378"/>
        <dbReference type="ChEBI" id="CHEBI:16526"/>
        <dbReference type="ChEBI" id="CHEBI:29991"/>
        <dbReference type="ChEBI" id="CHEBI:57966"/>
        <dbReference type="EC" id="4.1.1.11"/>
    </reaction>
</comment>
<comment type="cofactor">
    <cofactor evidence="1">
        <name>pyruvate</name>
        <dbReference type="ChEBI" id="CHEBI:15361"/>
    </cofactor>
    <text evidence="1">Binds 1 pyruvoyl group covalently per subunit.</text>
</comment>
<comment type="pathway">
    <text evidence="1">Cofactor biosynthesis; (R)-pantothenate biosynthesis; beta-alanine from L-aspartate: step 1/1.</text>
</comment>
<comment type="subunit">
    <text evidence="1">Heterooctamer of four alpha and four beta subunits.</text>
</comment>
<comment type="subcellular location">
    <subcellularLocation>
        <location evidence="1">Cytoplasm</location>
    </subcellularLocation>
</comment>
<comment type="PTM">
    <text evidence="1">Is synthesized initially as an inactive proenzyme, which is activated by self-cleavage at a specific serine bond to produce a beta-subunit with a hydroxyl group at its C-terminus and an alpha-subunit with a pyruvoyl group at its N-terminus.</text>
</comment>
<comment type="similarity">
    <text evidence="1">Belongs to the PanD family.</text>
</comment>
<evidence type="ECO:0000255" key="1">
    <source>
        <dbReference type="HAMAP-Rule" id="MF_00446"/>
    </source>
</evidence>
<gene>
    <name evidence="1" type="primary">panD</name>
    <name type="ordered locus">FTF1391</name>
</gene>
<reference key="1">
    <citation type="journal article" date="2007" name="PLoS ONE">
        <title>Genome sequencing shows that European isolates of Francisella tularensis subspecies tularensis are almost identical to US laboratory strain Schu S4.</title>
        <authorList>
            <person name="Chaudhuri R.R."/>
            <person name="Ren C.-P."/>
            <person name="Desmond L."/>
            <person name="Vincent G.A."/>
            <person name="Silman N.J."/>
            <person name="Brehm J.K."/>
            <person name="Elmore M.J."/>
            <person name="Hudson M.J."/>
            <person name="Forsman M."/>
            <person name="Isherwood K.E."/>
            <person name="Gurycova D."/>
            <person name="Minton N.P."/>
            <person name="Titball R.W."/>
            <person name="Pallen M.J."/>
            <person name="Vipond R."/>
        </authorList>
    </citation>
    <scope>NUCLEOTIDE SEQUENCE [LARGE SCALE GENOMIC DNA]</scope>
    <source>
        <strain>FSC 198</strain>
    </source>
</reference>
<name>PAND_FRAT1</name>
<sequence>MLISVLKSKISYATVTGKDLFYVGSITIDSEIMKQANIIENEKVQVVNLNNGERLETYVIKGEPNSKTIALNGPAARRCEIGDQLFIISYTQVDPTRENIKPKLVDLKTGD</sequence>
<dbReference type="EC" id="4.1.1.11" evidence="1"/>
<dbReference type="EMBL" id="AM286280">
    <property type="protein sequence ID" value="CAL09407.1"/>
    <property type="molecule type" value="Genomic_DNA"/>
</dbReference>
<dbReference type="RefSeq" id="WP_003022192.1">
    <property type="nucleotide sequence ID" value="NC_008245.1"/>
</dbReference>
<dbReference type="SMR" id="Q14GK9"/>
<dbReference type="KEGG" id="ftf:FTF1391"/>
<dbReference type="HOGENOM" id="CLU_115305_2_2_6"/>
<dbReference type="UniPathway" id="UPA00028">
    <property type="reaction ID" value="UER00002"/>
</dbReference>
<dbReference type="GO" id="GO:0005829">
    <property type="term" value="C:cytosol"/>
    <property type="evidence" value="ECO:0007669"/>
    <property type="project" value="TreeGrafter"/>
</dbReference>
<dbReference type="GO" id="GO:0004068">
    <property type="term" value="F:aspartate 1-decarboxylase activity"/>
    <property type="evidence" value="ECO:0007669"/>
    <property type="project" value="UniProtKB-UniRule"/>
</dbReference>
<dbReference type="GO" id="GO:0006523">
    <property type="term" value="P:alanine biosynthetic process"/>
    <property type="evidence" value="ECO:0007669"/>
    <property type="project" value="InterPro"/>
</dbReference>
<dbReference type="GO" id="GO:0015940">
    <property type="term" value="P:pantothenate biosynthetic process"/>
    <property type="evidence" value="ECO:0007669"/>
    <property type="project" value="UniProtKB-UniRule"/>
</dbReference>
<dbReference type="CDD" id="cd06919">
    <property type="entry name" value="Asp_decarbox"/>
    <property type="match status" value="1"/>
</dbReference>
<dbReference type="Gene3D" id="2.40.40.20">
    <property type="match status" value="1"/>
</dbReference>
<dbReference type="HAMAP" id="MF_00446">
    <property type="entry name" value="PanD"/>
    <property type="match status" value="1"/>
</dbReference>
<dbReference type="InterPro" id="IPR009010">
    <property type="entry name" value="Asp_de-COase-like_dom_sf"/>
</dbReference>
<dbReference type="InterPro" id="IPR003190">
    <property type="entry name" value="Asp_decarbox"/>
</dbReference>
<dbReference type="NCBIfam" id="TIGR00223">
    <property type="entry name" value="panD"/>
    <property type="match status" value="1"/>
</dbReference>
<dbReference type="PANTHER" id="PTHR21012">
    <property type="entry name" value="ASPARTATE 1-DECARBOXYLASE"/>
    <property type="match status" value="1"/>
</dbReference>
<dbReference type="PANTHER" id="PTHR21012:SF0">
    <property type="entry name" value="ASPARTATE 1-DECARBOXYLASE"/>
    <property type="match status" value="1"/>
</dbReference>
<dbReference type="Pfam" id="PF02261">
    <property type="entry name" value="Asp_decarbox"/>
    <property type="match status" value="1"/>
</dbReference>
<dbReference type="PIRSF" id="PIRSF006246">
    <property type="entry name" value="Asp_decarbox"/>
    <property type="match status" value="1"/>
</dbReference>
<dbReference type="SUPFAM" id="SSF50692">
    <property type="entry name" value="ADC-like"/>
    <property type="match status" value="1"/>
</dbReference>
<accession>Q14GK9</accession>
<keyword id="KW-0068">Autocatalytic cleavage</keyword>
<keyword id="KW-0963">Cytoplasm</keyword>
<keyword id="KW-0210">Decarboxylase</keyword>
<keyword id="KW-0456">Lyase</keyword>
<keyword id="KW-0566">Pantothenate biosynthesis</keyword>
<keyword id="KW-0670">Pyruvate</keyword>
<keyword id="KW-0704">Schiff base</keyword>
<keyword id="KW-0865">Zymogen</keyword>
<protein>
    <recommendedName>
        <fullName evidence="1">Aspartate 1-decarboxylase</fullName>
        <ecNumber evidence="1">4.1.1.11</ecNumber>
    </recommendedName>
    <alternativeName>
        <fullName evidence="1">Aspartate alpha-decarboxylase</fullName>
    </alternativeName>
    <component>
        <recommendedName>
            <fullName evidence="1">Aspartate 1-decarboxylase beta chain</fullName>
        </recommendedName>
    </component>
    <component>
        <recommendedName>
            <fullName evidence="1">Aspartate 1-decarboxylase alpha chain</fullName>
        </recommendedName>
    </component>
</protein>
<feature type="chain" id="PRO_0000306983" description="Aspartate 1-decarboxylase beta chain" evidence="1">
    <location>
        <begin position="1"/>
        <end position="24"/>
    </location>
</feature>
<feature type="chain" id="PRO_0000306984" description="Aspartate 1-decarboxylase alpha chain" evidence="1">
    <location>
        <begin position="25"/>
        <end position="111"/>
    </location>
</feature>
<feature type="active site" description="Schiff-base intermediate with substrate; via pyruvic acid" evidence="1">
    <location>
        <position position="25"/>
    </location>
</feature>
<feature type="active site" description="Proton donor" evidence="1">
    <location>
        <position position="58"/>
    </location>
</feature>
<feature type="binding site" evidence="1">
    <location>
        <position position="57"/>
    </location>
    <ligand>
        <name>substrate</name>
    </ligand>
</feature>
<feature type="binding site" evidence="1">
    <location>
        <begin position="73"/>
        <end position="75"/>
    </location>
    <ligand>
        <name>substrate</name>
    </ligand>
</feature>
<feature type="modified residue" description="Pyruvic acid (Ser)" evidence="1">
    <location>
        <position position="25"/>
    </location>
</feature>